<gene>
    <name type="primary">arb1</name>
    <name type="ORF">SPAC140.03</name>
</gene>
<organism>
    <name type="scientific">Schizosaccharomyces pombe (strain 972 / ATCC 24843)</name>
    <name type="common">Fission yeast</name>
    <dbReference type="NCBI Taxonomy" id="284812"/>
    <lineage>
        <taxon>Eukaryota</taxon>
        <taxon>Fungi</taxon>
        <taxon>Dikarya</taxon>
        <taxon>Ascomycota</taxon>
        <taxon>Taphrinomycotina</taxon>
        <taxon>Schizosaccharomycetes</taxon>
        <taxon>Schizosaccharomycetales</taxon>
        <taxon>Schizosaccharomycetaceae</taxon>
        <taxon>Schizosaccharomyces</taxon>
    </lineage>
</organism>
<protein>
    <recommendedName>
        <fullName>Argonaute-binding protein 1</fullName>
    </recommendedName>
</protein>
<accession>Q9P7B8</accession>
<sequence length="399" mass="45631">MAEGDFKNDSTGCIGDSVEFTTFKKRTGKSLGNRRKKRGLSGWEPYFQEPELTAEEKLENETLYSRNIPLTVRMERFIQRYRSRRKWSDPTRIRLFTMYLDLGGVSTGQKQFTGGTDINNDAKAREVSAQTTTDYIEYDILDEYDIDFKWVAGVFLSSHILYNAGLTKEEDLQIACQIVRNFLLSVLHNNVAPEFEDNIRDACLLAEQAETELISNKRLSTKLPGRLQRALASIHVDNYKGLWDKSQSDRTSDSSVNFIESNNTKFMPNDELFEPDGISRFSTQQARDYIQRTLGPRYLTGKVVEQEYLTVKLVSKTLLNFSNQSLCKAVFIVWDPPGSKYSQDTNKERLEVILESDLLNNTVDGTHLEGSFTFLDNGLTILDTVLAVLPTFYEEVKDE</sequence>
<proteinExistence type="evidence at protein level"/>
<reference evidence="4" key="1">
    <citation type="journal article" date="2002" name="Nature">
        <title>The genome sequence of Schizosaccharomyces pombe.</title>
        <authorList>
            <person name="Wood V."/>
            <person name="Gwilliam R."/>
            <person name="Rajandream M.A."/>
            <person name="Lyne M.H."/>
            <person name="Lyne R."/>
            <person name="Stewart A."/>
            <person name="Sgouros J.G."/>
            <person name="Peat N."/>
            <person name="Hayles J."/>
            <person name="Baker S.G."/>
            <person name="Basham D."/>
            <person name="Bowman S."/>
            <person name="Brooks K."/>
            <person name="Brown D."/>
            <person name="Brown S."/>
            <person name="Chillingworth T."/>
            <person name="Churcher C.M."/>
            <person name="Collins M."/>
            <person name="Connor R."/>
            <person name="Cronin A."/>
            <person name="Davis P."/>
            <person name="Feltwell T."/>
            <person name="Fraser A."/>
            <person name="Gentles S."/>
            <person name="Goble A."/>
            <person name="Hamlin N."/>
            <person name="Harris D.E."/>
            <person name="Hidalgo J."/>
            <person name="Hodgson G."/>
            <person name="Holroyd S."/>
            <person name="Hornsby T."/>
            <person name="Howarth S."/>
            <person name="Huckle E.J."/>
            <person name="Hunt S."/>
            <person name="Jagels K."/>
            <person name="James K.D."/>
            <person name="Jones L."/>
            <person name="Jones M."/>
            <person name="Leather S."/>
            <person name="McDonald S."/>
            <person name="McLean J."/>
            <person name="Mooney P."/>
            <person name="Moule S."/>
            <person name="Mungall K.L."/>
            <person name="Murphy L.D."/>
            <person name="Niblett D."/>
            <person name="Odell C."/>
            <person name="Oliver K."/>
            <person name="O'Neil S."/>
            <person name="Pearson D."/>
            <person name="Quail M.A."/>
            <person name="Rabbinowitsch E."/>
            <person name="Rutherford K.M."/>
            <person name="Rutter S."/>
            <person name="Saunders D."/>
            <person name="Seeger K."/>
            <person name="Sharp S."/>
            <person name="Skelton J."/>
            <person name="Simmonds M.N."/>
            <person name="Squares R."/>
            <person name="Squares S."/>
            <person name="Stevens K."/>
            <person name="Taylor K."/>
            <person name="Taylor R.G."/>
            <person name="Tivey A."/>
            <person name="Walsh S.V."/>
            <person name="Warren T."/>
            <person name="Whitehead S."/>
            <person name="Woodward J.R."/>
            <person name="Volckaert G."/>
            <person name="Aert R."/>
            <person name="Robben J."/>
            <person name="Grymonprez B."/>
            <person name="Weltjens I."/>
            <person name="Vanstreels E."/>
            <person name="Rieger M."/>
            <person name="Schaefer M."/>
            <person name="Mueller-Auer S."/>
            <person name="Gabel C."/>
            <person name="Fuchs M."/>
            <person name="Duesterhoeft A."/>
            <person name="Fritzc C."/>
            <person name="Holzer E."/>
            <person name="Moestl D."/>
            <person name="Hilbert H."/>
            <person name="Borzym K."/>
            <person name="Langer I."/>
            <person name="Beck A."/>
            <person name="Lehrach H."/>
            <person name="Reinhardt R."/>
            <person name="Pohl T.M."/>
            <person name="Eger P."/>
            <person name="Zimmermann W."/>
            <person name="Wedler H."/>
            <person name="Wambutt R."/>
            <person name="Purnelle B."/>
            <person name="Goffeau A."/>
            <person name="Cadieu E."/>
            <person name="Dreano S."/>
            <person name="Gloux S."/>
            <person name="Lelaure V."/>
            <person name="Mottier S."/>
            <person name="Galibert F."/>
            <person name="Aves S.J."/>
            <person name="Xiang Z."/>
            <person name="Hunt C."/>
            <person name="Moore K."/>
            <person name="Hurst S.M."/>
            <person name="Lucas M."/>
            <person name="Rochet M."/>
            <person name="Gaillardin C."/>
            <person name="Tallada V.A."/>
            <person name="Garzon A."/>
            <person name="Thode G."/>
            <person name="Daga R.R."/>
            <person name="Cruzado L."/>
            <person name="Jimenez J."/>
            <person name="Sanchez M."/>
            <person name="del Rey F."/>
            <person name="Benito J."/>
            <person name="Dominguez A."/>
            <person name="Revuelta J.L."/>
            <person name="Moreno S."/>
            <person name="Armstrong J."/>
            <person name="Forsburg S.L."/>
            <person name="Cerutti L."/>
            <person name="Lowe T."/>
            <person name="McCombie W.R."/>
            <person name="Paulsen I."/>
            <person name="Potashkin J."/>
            <person name="Shpakovski G.V."/>
            <person name="Ussery D."/>
            <person name="Barrell B.G."/>
            <person name="Nurse P."/>
        </authorList>
    </citation>
    <scope>NUCLEOTIDE SEQUENCE [LARGE SCALE GENOMIC DNA]</scope>
    <source>
        <strain>972 / ATCC 24843</strain>
    </source>
</reference>
<reference evidence="3" key="2">
    <citation type="journal article" date="2006" name="Nat. Biotechnol.">
        <title>ORFeome cloning and global analysis of protein localization in the fission yeast Schizosaccharomyces pombe.</title>
        <authorList>
            <person name="Matsuyama A."/>
            <person name="Arai R."/>
            <person name="Yashiroda Y."/>
            <person name="Shirai A."/>
            <person name="Kamata A."/>
            <person name="Sekido S."/>
            <person name="Kobayashi Y."/>
            <person name="Hashimoto A."/>
            <person name="Hamamoto M."/>
            <person name="Hiraoka Y."/>
            <person name="Horinouchi S."/>
            <person name="Yoshida M."/>
        </authorList>
    </citation>
    <scope>SUBCELLULAR LOCATION [LARGE SCALE ANALYSIS]</scope>
</reference>
<reference evidence="3" key="3">
    <citation type="journal article" date="2007" name="Nat. Struct. Mol. Biol.">
        <title>Two different Argonaute complexes are required for siRNA generation and heterochromatin assembly in fission yeast.</title>
        <authorList>
            <person name="Buker S.M."/>
            <person name="Iida T."/>
            <person name="Buehler M."/>
            <person name="Villen J."/>
            <person name="Gygi S.P."/>
            <person name="Nakayama J."/>
            <person name="Moazed D."/>
        </authorList>
    </citation>
    <scope>FUNCTION</scope>
    <scope>INTERACTION WITH AGO1</scope>
    <scope>IDENTIFICATION IN THE ARC COMPLEX</scope>
    <scope>SUBCELLULAR LOCATION</scope>
</reference>
<feature type="chain" id="PRO_0000284724" description="Argonaute-binding protein 1">
    <location>
        <begin position="1"/>
        <end position="399"/>
    </location>
</feature>
<name>ARB1_SCHPO</name>
<evidence type="ECO:0000269" key="1">
    <source>
    </source>
</evidence>
<evidence type="ECO:0000269" key="2">
    <source>
    </source>
</evidence>
<evidence type="ECO:0000305" key="3"/>
<evidence type="ECO:0000312" key="4">
    <source>
        <dbReference type="EMBL" id="CAB86414.1"/>
    </source>
</evidence>
<dbReference type="EMBL" id="CU329670">
    <property type="protein sequence ID" value="CAB86414.1"/>
    <property type="molecule type" value="Genomic_DNA"/>
</dbReference>
<dbReference type="RefSeq" id="NP_593532.1">
    <property type="nucleotide sequence ID" value="NM_001018966.2"/>
</dbReference>
<dbReference type="BioGRID" id="279308">
    <property type="interactions" value="42"/>
</dbReference>
<dbReference type="ComplexPortal" id="CPX-25779">
    <property type="entry name" value="Argonaute siRNA chaperone complex"/>
</dbReference>
<dbReference type="DIP" id="DIP-29299N"/>
<dbReference type="FunCoup" id="Q9P7B8">
    <property type="interactions" value="5"/>
</dbReference>
<dbReference type="IntAct" id="Q9P7B8">
    <property type="interactions" value="2"/>
</dbReference>
<dbReference type="STRING" id="284812.Q9P7B8"/>
<dbReference type="PaxDb" id="4896-SPAC140.03.1"/>
<dbReference type="EnsemblFungi" id="SPAC140.03.1">
    <property type="protein sequence ID" value="SPAC140.03.1:pep"/>
    <property type="gene ID" value="SPAC140.03"/>
</dbReference>
<dbReference type="GeneID" id="2542862"/>
<dbReference type="KEGG" id="spo:2542862"/>
<dbReference type="PomBase" id="SPAC140.03">
    <property type="gene designation" value="arb1"/>
</dbReference>
<dbReference type="VEuPathDB" id="FungiDB:SPAC140.03"/>
<dbReference type="eggNOG" id="ENOG502S0TP">
    <property type="taxonomic scope" value="Eukaryota"/>
</dbReference>
<dbReference type="HOGENOM" id="CLU_607149_0_0_1"/>
<dbReference type="InParanoid" id="Q9P7B8"/>
<dbReference type="OMA" id="VRMERFI"/>
<dbReference type="PhylomeDB" id="Q9P7B8"/>
<dbReference type="PRO" id="PR:Q9P7B8"/>
<dbReference type="Proteomes" id="UP000002485">
    <property type="component" value="Chromosome I"/>
</dbReference>
<dbReference type="GO" id="GO:0033167">
    <property type="term" value="C:ARC complex"/>
    <property type="evidence" value="ECO:0000314"/>
    <property type="project" value="PomBase"/>
</dbReference>
<dbReference type="GO" id="GO:0005737">
    <property type="term" value="C:cytoplasm"/>
    <property type="evidence" value="ECO:0000314"/>
    <property type="project" value="PomBase"/>
</dbReference>
<dbReference type="GO" id="GO:0005829">
    <property type="term" value="C:cytosol"/>
    <property type="evidence" value="ECO:0007005"/>
    <property type="project" value="PomBase"/>
</dbReference>
<dbReference type="GO" id="GO:0005634">
    <property type="term" value="C:nucleus"/>
    <property type="evidence" value="ECO:0000314"/>
    <property type="project" value="PomBase"/>
</dbReference>
<dbReference type="GO" id="GO:0060698">
    <property type="term" value="F:endoribonuclease inhibitor activity"/>
    <property type="evidence" value="ECO:0000314"/>
    <property type="project" value="PomBase"/>
</dbReference>
<dbReference type="GO" id="GO:0008428">
    <property type="term" value="F:ribonuclease inhibitor activity"/>
    <property type="evidence" value="ECO:0000314"/>
    <property type="project" value="PomBase"/>
</dbReference>
<dbReference type="GO" id="GO:0140727">
    <property type="term" value="P:siRNA-mediated pericentric heterochromatin formation"/>
    <property type="evidence" value="ECO:0000315"/>
    <property type="project" value="PomBase"/>
</dbReference>
<dbReference type="InterPro" id="IPR018606">
    <property type="entry name" value="Arb1"/>
</dbReference>
<dbReference type="Pfam" id="PF09692">
    <property type="entry name" value="Arb1"/>
    <property type="match status" value="1"/>
</dbReference>
<keyword id="KW-0963">Cytoplasm</keyword>
<keyword id="KW-0539">Nucleus</keyword>
<keyword id="KW-1185">Reference proteome</keyword>
<keyword id="KW-0943">RNA-mediated gene silencing</keyword>
<comment type="function">
    <text evidence="2">Component of the argonaute siRNA chaperone (ARC) complex which is required for histone H3K9 methylation, heterochromatin assembly and siRNA generation. The ARC complex contains mostly double-stranded siRNA. Inhibits the release of the siRNA passenger strand from ago1 together with arb2. Inhibits the slicer activity of ago1. Required for swi6 localization to the centromeric repeats.</text>
</comment>
<comment type="subunit">
    <text evidence="2">Component of the argonaute siRNA chaperone (ARC) complex composed of ago1, arb1 and arb2. Interacts with ago1.</text>
</comment>
<comment type="interaction">
    <interactant intactId="EBI-15624131">
        <id>Q9P7B8</id>
    </interactant>
    <interactant intactId="EBI-422882">
        <id>O74957</id>
        <label>ago1</label>
    </interactant>
    <organismsDiffer>false</organismsDiffer>
    <experiments>5</experiments>
</comment>
<comment type="subcellular location">
    <subcellularLocation>
        <location evidence="1 2">Nucleus</location>
    </subcellularLocation>
    <subcellularLocation>
        <location evidence="1 2">Cytoplasm</location>
    </subcellularLocation>
    <text evidence="1 2">Predominantly nuclear.</text>
</comment>